<feature type="chain" id="PRO_0000072637" description="Trans-enoyl reductase TOXD">
    <location>
        <begin position="1"/>
        <end position="297"/>
    </location>
</feature>
<feature type="binding site" evidence="2">
    <location>
        <begin position="162"/>
        <end position="165"/>
    </location>
    <ligand>
        <name>NADP(+)</name>
        <dbReference type="ChEBI" id="CHEBI:58349"/>
    </ligand>
</feature>
<feature type="binding site" evidence="2">
    <location>
        <position position="203"/>
    </location>
    <ligand>
        <name>NADP(+)</name>
        <dbReference type="ChEBI" id="CHEBI:58349"/>
    </ligand>
</feature>
<protein>
    <recommendedName>
        <fullName evidence="1">Trans-enoyl reductase TOXD</fullName>
        <ecNumber evidence="1">1.-.-.-</ecNumber>
    </recommendedName>
    <alternativeName>
        <fullName evidence="5">TOX2 HC-toxin biosynthesis cluster protein TOXD</fullName>
    </alternativeName>
</protein>
<name>TOXD_COCCA</name>
<proteinExistence type="inferred from homology"/>
<accession>P54006</accession>
<gene>
    <name evidence="5" type="primary">TOXD</name>
</gene>
<keyword id="KW-0521">NADP</keyword>
<keyword id="KW-0560">Oxidoreductase</keyword>
<comment type="function">
    <text evidence="4 7">Trans-enoyl reductase; part of the diffuse TOX2 gene cluster that mediates the biosynthesis of the HC-toxin, cyclic tetrapeptide of structure cyclo(D-Pro-L-Ala-D-Ala-L-Aeo), where Aeo stands for 2-amino-9,10-epoxi-8-oxodecanoic acid (PubMed:8672886). HC-toxin is a determinant of specificity and virulence in the interaction between the producing fungus and its host, maize (Probable). TOXD does not seem to play a role in HC-toxin biosynthesis (Probable).</text>
</comment>
<comment type="subunit">
    <text evidence="2">Monomer.</text>
</comment>
<comment type="miscellaneous">
    <text evidence="3">The genes involved in HC-toxin biosynthesis, called collectively TOX2, are organized into a diffuse cluster that spans &gt;500 kb. All of the known genes are duplicated or triplicated within this region, with some variation in copy number and chromosomal location among different race 1 strains.</text>
</comment>
<comment type="similarity">
    <text evidence="6">Belongs to the zinc-containing alcohol dehydrogenase family.</text>
</comment>
<organism>
    <name type="scientific">Cochliobolus carbonum</name>
    <name type="common">Maize leaf spot fungus</name>
    <name type="synonym">Bipolaris zeicola</name>
    <dbReference type="NCBI Taxonomy" id="5017"/>
    <lineage>
        <taxon>Eukaryota</taxon>
        <taxon>Fungi</taxon>
        <taxon>Dikarya</taxon>
        <taxon>Ascomycota</taxon>
        <taxon>Pezizomycotina</taxon>
        <taxon>Dothideomycetes</taxon>
        <taxon>Pleosporomycetidae</taxon>
        <taxon>Pleosporales</taxon>
        <taxon>Pleosporineae</taxon>
        <taxon>Pleosporaceae</taxon>
        <taxon>Bipolaris</taxon>
    </lineage>
</organism>
<dbReference type="EC" id="1.-.-.-" evidence="1"/>
<dbReference type="EMBL" id="X92391">
    <property type="protein sequence ID" value="CAA63129.1"/>
    <property type="molecule type" value="Genomic_DNA"/>
</dbReference>
<dbReference type="SMR" id="P54006"/>
<dbReference type="GO" id="GO:0016651">
    <property type="term" value="F:oxidoreductase activity, acting on NAD(P)H"/>
    <property type="evidence" value="ECO:0007669"/>
    <property type="project" value="InterPro"/>
</dbReference>
<dbReference type="CDD" id="cd08249">
    <property type="entry name" value="enoyl_reductase_like"/>
    <property type="match status" value="1"/>
</dbReference>
<dbReference type="Gene3D" id="3.90.180.10">
    <property type="entry name" value="Medium-chain alcohol dehydrogenases, catalytic domain"/>
    <property type="match status" value="1"/>
</dbReference>
<dbReference type="Gene3D" id="3.40.50.720">
    <property type="entry name" value="NAD(P)-binding Rossmann-like Domain"/>
    <property type="match status" value="1"/>
</dbReference>
<dbReference type="InterPro" id="IPR013149">
    <property type="entry name" value="ADH-like_C"/>
</dbReference>
<dbReference type="InterPro" id="IPR013154">
    <property type="entry name" value="ADH-like_N"/>
</dbReference>
<dbReference type="InterPro" id="IPR011032">
    <property type="entry name" value="GroES-like_sf"/>
</dbReference>
<dbReference type="InterPro" id="IPR036291">
    <property type="entry name" value="NAD(P)-bd_dom_sf"/>
</dbReference>
<dbReference type="InterPro" id="IPR020843">
    <property type="entry name" value="PKS_ER"/>
</dbReference>
<dbReference type="InterPro" id="IPR047122">
    <property type="entry name" value="Trans-enoyl_RdTase-like"/>
</dbReference>
<dbReference type="PANTHER" id="PTHR45348">
    <property type="entry name" value="HYPOTHETICAL OXIDOREDUCTASE (EUROFUNG)"/>
    <property type="match status" value="1"/>
</dbReference>
<dbReference type="PANTHER" id="PTHR45348:SF2">
    <property type="entry name" value="ZINC-TYPE ALCOHOL DEHYDROGENASE-LIKE PROTEIN C2E1P3.01"/>
    <property type="match status" value="1"/>
</dbReference>
<dbReference type="Pfam" id="PF08240">
    <property type="entry name" value="ADH_N"/>
    <property type="match status" value="1"/>
</dbReference>
<dbReference type="Pfam" id="PF00107">
    <property type="entry name" value="ADH_zinc_N"/>
    <property type="match status" value="1"/>
</dbReference>
<dbReference type="SMART" id="SM00829">
    <property type="entry name" value="PKS_ER"/>
    <property type="match status" value="1"/>
</dbReference>
<dbReference type="SUPFAM" id="SSF50129">
    <property type="entry name" value="GroES-like"/>
    <property type="match status" value="1"/>
</dbReference>
<dbReference type="SUPFAM" id="SSF51735">
    <property type="entry name" value="NAD(P)-binding Rossmann-fold domains"/>
    <property type="match status" value="1"/>
</dbReference>
<sequence>MTFQKAIVTEAPHRARLVSDRLIPKLRDDYILVRTVSVALNPTDWKHILRLSPPGCLVGCDYAGIVEEVGRSVKKPFKKGDRVCGFAHGGNAVFSDDGTFAEVITVKGDIQAWIPENLSFQEAATLGVGIKTVGQGLYQSLKLSWPTTPIEHAVPILIYGGSTATGTLAIQLAKLSGYRVITTCSPHHFELMKSLGADLVFDYHEITSADHIRRCTQNKLKLVFDTISIDVSARFCDRAMSTEGGEYSALLDVSIARTNISSRWTLAYTVLGEGFTSEQIVFQPYPTTMSSGRNFGM</sequence>
<evidence type="ECO:0000250" key="1">
    <source>
        <dbReference type="UniProtKB" id="D7UPN2"/>
    </source>
</evidence>
<evidence type="ECO:0000250" key="2">
    <source>
        <dbReference type="UniProtKB" id="Q9Y7D0"/>
    </source>
</evidence>
<evidence type="ECO:0000269" key="3">
    <source>
    </source>
</evidence>
<evidence type="ECO:0000269" key="4">
    <source>
    </source>
</evidence>
<evidence type="ECO:0000303" key="5">
    <source>
    </source>
</evidence>
<evidence type="ECO:0000305" key="6"/>
<evidence type="ECO:0000305" key="7">
    <source>
    </source>
</evidence>
<reference key="1">
    <citation type="submission" date="1995-10" db="EMBL/GenBank/DDBJ databases">
        <title>ToxD, a gene cloned from a HC-toxin producing strain of Cochliobolus carbonum, has no role in HC-toxin biosynthesis.</title>
        <authorList>
            <person name="Cheng Y.-Q."/>
            <person name="Ahn J.-H."/>
            <person name="Walton J.D."/>
        </authorList>
    </citation>
    <scope>NUCLEOTIDE SEQUENCE [GENOMIC DNA]</scope>
    <source>
        <strain>ATCC 90305 / SB111 / 2R15</strain>
    </source>
</reference>
<reference key="2">
    <citation type="journal article" date="1996" name="Plant Cell">
        <title>Chromosomal organization of TOX2, a complex locus controlling host-selective toxin biosynthesis in Cochliobolus carbonum.</title>
        <authorList>
            <person name="Ahn J.H."/>
            <person name="Walton J.D."/>
        </authorList>
    </citation>
    <scope>IDENTIFICATION WITHIN THE TOX2 CLUSTER</scope>
    <scope>FUNCTION</scope>
</reference>
<reference key="3">
    <citation type="journal article" date="2002" name="Fungal Genet. Biol.">
        <title>An extended physical map of the TOX2 locus of Cochliobolus carbonum required for biosynthesis of HC-toxin.</title>
        <authorList>
            <person name="Ahn J.H."/>
            <person name="Cheng Y.Q."/>
            <person name="Walton J.D."/>
        </authorList>
    </citation>
    <scope>TOX2 CLUSTER ORGANIZATION</scope>
</reference>